<reference key="1">
    <citation type="submission" date="2003-03" db="EMBL/GenBank/DDBJ databases">
        <title>Nucleotide sequence variation of the mink preprolactin gene.</title>
        <authorList>
            <person name="Vardy T.L."/>
            <person name="Farid A."/>
        </authorList>
    </citation>
    <scope>NUCLEOTIDE SEQUENCE [GENOMIC DNA]</scope>
</reference>
<reference key="2">
    <citation type="journal article" date="1993" name="Genetika">
        <title>The evolutionarily conserved gene Nc70F, expressed in nerve tissue of Drosophila melanogaster, encodes a protein homologous to the mouse delta transcription factor.</title>
        <authorList>
            <person name="Perelygina L.M."/>
            <person name="Baricheva E.M."/>
            <person name="Sebeleva T.E."/>
            <person name="Kokoza V.A."/>
        </authorList>
    </citation>
    <scope>NUCLEOTIDE SEQUENCE OF 37-229</scope>
</reference>
<reference key="3">
    <citation type="journal article" date="1993" name="Sibirskii Biol. Zh.">
        <title>Nucleotide sequence of mink prolactin mRNA from pituitary.</title>
        <authorList>
            <person name="Bondar A.A."/>
            <person name="Golovin S.J."/>
            <person name="Mertvetsov N.P."/>
        </authorList>
    </citation>
    <scope>NUCLEOTIDE SEQUENCE [MRNA] OF 55-229</scope>
    <source>
        <tissue>Pituitary</tissue>
    </source>
</reference>
<accession>P29234</accession>
<accession>Q864R8</accession>
<sequence length="229" mass="26194">MDNKGWSLKGSLLPLLLLVSDLLLCQGVTSLPICPTGAVNCQVSLRDLFDRAVILSHYIHNLSSEMFNEFDKRYAQGRGFITKAINSCHTSSLSTPEDKEQAQQIHHEDLLNLILRVLRSWNDPLYHLVSEVRGMQEAPDSILSRAIEIEEQNRRLLEGMEKIVGQVHPGVRENEVYSVWSGLPSLQMADEDSRLFAFYNLLHCLRRDSHKIDNYLKLLKCRIVYDSNC</sequence>
<organism>
    <name type="scientific">Neovison vison</name>
    <name type="common">American mink</name>
    <name type="synonym">Mustela vison</name>
    <dbReference type="NCBI Taxonomy" id="452646"/>
    <lineage>
        <taxon>Eukaryota</taxon>
        <taxon>Metazoa</taxon>
        <taxon>Chordata</taxon>
        <taxon>Craniata</taxon>
        <taxon>Vertebrata</taxon>
        <taxon>Euteleostomi</taxon>
        <taxon>Mammalia</taxon>
        <taxon>Eutheria</taxon>
        <taxon>Laurasiatheria</taxon>
        <taxon>Carnivora</taxon>
        <taxon>Caniformia</taxon>
        <taxon>Musteloidea</taxon>
        <taxon>Mustelidae</taxon>
        <taxon>Mustelinae</taxon>
        <taxon>Neogale</taxon>
    </lineage>
</organism>
<gene>
    <name type="primary">PRL</name>
</gene>
<feature type="signal peptide" evidence="4">
    <location>
        <begin position="1"/>
        <end position="30"/>
    </location>
</feature>
<feature type="chain" id="PRO_0000032922" description="Prolactin">
    <location>
        <begin position="31"/>
        <end position="229"/>
    </location>
</feature>
<feature type="modified residue" description="Phosphoserine" evidence="3">
    <location>
        <position position="56"/>
    </location>
</feature>
<feature type="modified residue" description="Phosphoserine" evidence="3">
    <location>
        <position position="64"/>
    </location>
</feature>
<feature type="modified residue" description="Phosphoserine" evidence="3">
    <location>
        <position position="120"/>
    </location>
</feature>
<feature type="disulfide bond" evidence="1">
    <location>
        <begin position="34"/>
        <end position="41"/>
    </location>
</feature>
<feature type="disulfide bond" evidence="1">
    <location>
        <begin position="88"/>
        <end position="204"/>
    </location>
</feature>
<feature type="disulfide bond" evidence="1">
    <location>
        <begin position="221"/>
        <end position="229"/>
    </location>
</feature>
<feature type="sequence conflict" description="In Ref. 2; CAA42447." evidence="5" ref="2">
    <original>Q</original>
    <variation>H</variation>
    <location>
        <position position="76"/>
    </location>
</feature>
<feature type="sequence conflict" description="In Ref. 2; CAA42447." evidence="5" ref="2">
    <original>D</original>
    <variation>E</variation>
    <location>
        <position position="190"/>
    </location>
</feature>
<feature type="sequence conflict" description="In Ref. 2; CAA42447." evidence="5" ref="2">
    <original>D</original>
    <variation>H</variation>
    <location>
        <position position="226"/>
    </location>
</feature>
<dbReference type="EMBL" id="AY249860">
    <property type="protein sequence ID" value="AAO92934.1"/>
    <property type="molecule type" value="Genomic_DNA"/>
</dbReference>
<dbReference type="EMBL" id="X59785">
    <property type="protein sequence ID" value="CAA42447.1"/>
    <property type="molecule type" value="mRNA"/>
</dbReference>
<dbReference type="EMBL" id="X63235">
    <property type="protein sequence ID" value="CAA44910.1"/>
    <property type="molecule type" value="mRNA"/>
</dbReference>
<dbReference type="PIR" id="S18882">
    <property type="entry name" value="S18882"/>
</dbReference>
<dbReference type="SMR" id="P29234"/>
<dbReference type="Proteomes" id="UP000694425">
    <property type="component" value="Unplaced"/>
</dbReference>
<dbReference type="GO" id="GO:0005615">
    <property type="term" value="C:extracellular space"/>
    <property type="evidence" value="ECO:0007669"/>
    <property type="project" value="TreeGrafter"/>
</dbReference>
<dbReference type="GO" id="GO:0005179">
    <property type="term" value="F:hormone activity"/>
    <property type="evidence" value="ECO:0007669"/>
    <property type="project" value="UniProtKB-KW"/>
</dbReference>
<dbReference type="GO" id="GO:0005148">
    <property type="term" value="F:prolactin receptor binding"/>
    <property type="evidence" value="ECO:0007669"/>
    <property type="project" value="TreeGrafter"/>
</dbReference>
<dbReference type="GO" id="GO:0007565">
    <property type="term" value="P:female pregnancy"/>
    <property type="evidence" value="ECO:0007669"/>
    <property type="project" value="TreeGrafter"/>
</dbReference>
<dbReference type="GO" id="GO:0007595">
    <property type="term" value="P:lactation"/>
    <property type="evidence" value="ECO:0007669"/>
    <property type="project" value="UniProtKB-KW"/>
</dbReference>
<dbReference type="GO" id="GO:0008284">
    <property type="term" value="P:positive regulation of cell population proliferation"/>
    <property type="evidence" value="ECO:0007669"/>
    <property type="project" value="TreeGrafter"/>
</dbReference>
<dbReference type="GO" id="GO:1903489">
    <property type="term" value="P:positive regulation of lactation"/>
    <property type="evidence" value="ECO:0007669"/>
    <property type="project" value="TreeGrafter"/>
</dbReference>
<dbReference type="GO" id="GO:0046427">
    <property type="term" value="P:positive regulation of receptor signaling pathway via JAK-STAT"/>
    <property type="evidence" value="ECO:0007669"/>
    <property type="project" value="TreeGrafter"/>
</dbReference>
<dbReference type="GO" id="GO:0031667">
    <property type="term" value="P:response to nutrient levels"/>
    <property type="evidence" value="ECO:0007669"/>
    <property type="project" value="TreeGrafter"/>
</dbReference>
<dbReference type="CDD" id="cd10288">
    <property type="entry name" value="prolactin_like"/>
    <property type="match status" value="1"/>
</dbReference>
<dbReference type="FunFam" id="1.20.1250.10:FF:000003">
    <property type="entry name" value="Prolactin"/>
    <property type="match status" value="1"/>
</dbReference>
<dbReference type="Gene3D" id="1.20.1250.10">
    <property type="match status" value="1"/>
</dbReference>
<dbReference type="InterPro" id="IPR009079">
    <property type="entry name" value="4_helix_cytokine-like_core"/>
</dbReference>
<dbReference type="InterPro" id="IPR001400">
    <property type="entry name" value="Somatotropin/Prolactin"/>
</dbReference>
<dbReference type="InterPro" id="IPR018116">
    <property type="entry name" value="Somatotropin_CS"/>
</dbReference>
<dbReference type="PANTHER" id="PTHR11417:SF5">
    <property type="entry name" value="PROLACTIN"/>
    <property type="match status" value="1"/>
</dbReference>
<dbReference type="PANTHER" id="PTHR11417">
    <property type="entry name" value="SOMATOTROPIN,PROLACTIN"/>
    <property type="match status" value="1"/>
</dbReference>
<dbReference type="Pfam" id="PF00103">
    <property type="entry name" value="Hormone_1"/>
    <property type="match status" value="1"/>
</dbReference>
<dbReference type="PRINTS" id="PR00836">
    <property type="entry name" value="SOMATOTROPIN"/>
</dbReference>
<dbReference type="SUPFAM" id="SSF47266">
    <property type="entry name" value="4-helical cytokines"/>
    <property type="match status" value="1"/>
</dbReference>
<dbReference type="PROSITE" id="PS00266">
    <property type="entry name" value="SOMATOTROPIN_1"/>
    <property type="match status" value="1"/>
</dbReference>
<dbReference type="PROSITE" id="PS00338">
    <property type="entry name" value="SOMATOTROPIN_2"/>
    <property type="match status" value="1"/>
</dbReference>
<protein>
    <recommendedName>
        <fullName>Prolactin</fullName>
        <shortName>PRL</shortName>
    </recommendedName>
</protein>
<comment type="function">
    <text>Prolactin acts primarily on the mammary gland by promoting lactation.</text>
</comment>
<comment type="subunit">
    <text evidence="2">Interacts with PRLR.</text>
</comment>
<comment type="subcellular location">
    <subcellularLocation>
        <location>Secreted</location>
    </subcellularLocation>
</comment>
<comment type="similarity">
    <text evidence="5">Belongs to the somatotropin/prolactin family.</text>
</comment>
<evidence type="ECO:0000250" key="1"/>
<evidence type="ECO:0000250" key="2">
    <source>
        <dbReference type="UniProtKB" id="P01236"/>
    </source>
</evidence>
<evidence type="ECO:0000250" key="3">
    <source>
        <dbReference type="UniProtKB" id="P01239"/>
    </source>
</evidence>
<evidence type="ECO:0000255" key="4"/>
<evidence type="ECO:0000305" key="5"/>
<proteinExistence type="evidence at transcript level"/>
<keyword id="KW-1015">Disulfide bond</keyword>
<keyword id="KW-0372">Hormone</keyword>
<keyword id="KW-0421">Lactation</keyword>
<keyword id="KW-0597">Phosphoprotein</keyword>
<keyword id="KW-1185">Reference proteome</keyword>
<keyword id="KW-0964">Secreted</keyword>
<keyword id="KW-0732">Signal</keyword>
<name>PRL_NEOVI</name>